<proteinExistence type="inferred from homology"/>
<sequence length="99" mass="11313">MAHTAFETSLDTLLEEPKMYRVLLLNDDWTAMDFVARILMEVFDKTSDEATAITLKIHNDGKGVCGIYTYDIAELKMQIVSQMAKQHGYPLRVITEEMP</sequence>
<dbReference type="EMBL" id="AE017125">
    <property type="protein sequence ID" value="AAP78162.1"/>
    <property type="status" value="ALT_INIT"/>
    <property type="molecule type" value="Genomic_DNA"/>
</dbReference>
<dbReference type="RefSeq" id="WP_034364865.1">
    <property type="nucleotide sequence ID" value="NC_004917.1"/>
</dbReference>
<dbReference type="SMR" id="Q7VFW0"/>
<dbReference type="STRING" id="235279.HH_1565"/>
<dbReference type="KEGG" id="hhe:HH_1565"/>
<dbReference type="eggNOG" id="COG2127">
    <property type="taxonomic scope" value="Bacteria"/>
</dbReference>
<dbReference type="HOGENOM" id="CLU_134358_1_0_7"/>
<dbReference type="OrthoDB" id="9796121at2"/>
<dbReference type="Proteomes" id="UP000002495">
    <property type="component" value="Chromosome"/>
</dbReference>
<dbReference type="GO" id="GO:0030163">
    <property type="term" value="P:protein catabolic process"/>
    <property type="evidence" value="ECO:0007669"/>
    <property type="project" value="InterPro"/>
</dbReference>
<dbReference type="GO" id="GO:0006508">
    <property type="term" value="P:proteolysis"/>
    <property type="evidence" value="ECO:0007669"/>
    <property type="project" value="UniProtKB-UniRule"/>
</dbReference>
<dbReference type="FunFam" id="3.30.1390.10:FF:000002">
    <property type="entry name" value="ATP-dependent Clp protease adapter protein ClpS"/>
    <property type="match status" value="1"/>
</dbReference>
<dbReference type="Gene3D" id="3.30.1390.10">
    <property type="match status" value="1"/>
</dbReference>
<dbReference type="HAMAP" id="MF_00302">
    <property type="entry name" value="ClpS"/>
    <property type="match status" value="1"/>
</dbReference>
<dbReference type="InterPro" id="IPR022935">
    <property type="entry name" value="ClpS"/>
</dbReference>
<dbReference type="InterPro" id="IPR003769">
    <property type="entry name" value="ClpS_core"/>
</dbReference>
<dbReference type="InterPro" id="IPR014719">
    <property type="entry name" value="Ribosomal_bL12_C/ClpS-like"/>
</dbReference>
<dbReference type="Pfam" id="PF02617">
    <property type="entry name" value="ClpS"/>
    <property type="match status" value="1"/>
</dbReference>
<dbReference type="SUPFAM" id="SSF54736">
    <property type="entry name" value="ClpS-like"/>
    <property type="match status" value="1"/>
</dbReference>
<reference key="1">
    <citation type="journal article" date="2003" name="Proc. Natl. Acad. Sci. U.S.A.">
        <title>The complete genome sequence of the carcinogenic bacterium Helicobacter hepaticus.</title>
        <authorList>
            <person name="Suerbaum S."/>
            <person name="Josenhans C."/>
            <person name="Sterzenbach T."/>
            <person name="Drescher B."/>
            <person name="Brandt P."/>
            <person name="Bell M."/>
            <person name="Droege M."/>
            <person name="Fartmann B."/>
            <person name="Fischer H.-P."/>
            <person name="Ge Z."/>
            <person name="Hoerster A."/>
            <person name="Holland R."/>
            <person name="Klein K."/>
            <person name="Koenig J."/>
            <person name="Macko L."/>
            <person name="Mendz G.L."/>
            <person name="Nyakatura G."/>
            <person name="Schauer D.B."/>
            <person name="Shen Z."/>
            <person name="Weber J."/>
            <person name="Frosch M."/>
            <person name="Fox J.G."/>
        </authorList>
    </citation>
    <scope>NUCLEOTIDE SEQUENCE [LARGE SCALE GENOMIC DNA]</scope>
    <source>
        <strain>ATCC 51449 / 3B1</strain>
    </source>
</reference>
<name>CLPS_HELHP</name>
<keyword id="KW-1185">Reference proteome</keyword>
<gene>
    <name evidence="1" type="primary">clpS</name>
    <name type="ordered locus">HH_1565</name>
</gene>
<feature type="chain" id="PRO_0000215713" description="ATP-dependent Clp protease adapter protein ClpS">
    <location>
        <begin position="1"/>
        <end position="99"/>
    </location>
</feature>
<accession>Q7VFW0</accession>
<protein>
    <recommendedName>
        <fullName evidence="1">ATP-dependent Clp protease adapter protein ClpS</fullName>
    </recommendedName>
</protein>
<organism>
    <name type="scientific">Helicobacter hepaticus (strain ATCC 51449 / 3B1)</name>
    <dbReference type="NCBI Taxonomy" id="235279"/>
    <lineage>
        <taxon>Bacteria</taxon>
        <taxon>Pseudomonadati</taxon>
        <taxon>Campylobacterota</taxon>
        <taxon>Epsilonproteobacteria</taxon>
        <taxon>Campylobacterales</taxon>
        <taxon>Helicobacteraceae</taxon>
        <taxon>Helicobacter</taxon>
    </lineage>
</organism>
<evidence type="ECO:0000255" key="1">
    <source>
        <dbReference type="HAMAP-Rule" id="MF_00302"/>
    </source>
</evidence>
<evidence type="ECO:0000305" key="2"/>
<comment type="function">
    <text evidence="1">Involved in the modulation of the specificity of the ClpAP-mediated ATP-dependent protein degradation.</text>
</comment>
<comment type="subunit">
    <text evidence="1">Binds to the N-terminal domain of the chaperone ClpA.</text>
</comment>
<comment type="similarity">
    <text evidence="1">Belongs to the ClpS family.</text>
</comment>
<comment type="sequence caution" evidence="2">
    <conflict type="erroneous initiation">
        <sequence resource="EMBL-CDS" id="AAP78162"/>
    </conflict>
</comment>